<reference key="1">
    <citation type="journal article" date="1995" name="Proc. Natl. Acad. Sci. U.S.A.">
        <title>Transcription in archaea: similarity to that in eucarya.</title>
        <authorList>
            <person name="Langer D."/>
            <person name="Hain J."/>
            <person name="Thuriaux P."/>
            <person name="Zillig W."/>
        </authorList>
    </citation>
    <scope>NUCLEOTIDE SEQUENCE [GENOMIC DNA]</scope>
    <source>
        <strain>ATCC 33909 / DSM 639 / JCM 8929 / NBRC 15157 / NCIMB 11770</strain>
    </source>
</reference>
<reference key="2">
    <citation type="journal article" date="2005" name="J. Bacteriol.">
        <title>The genome of Sulfolobus acidocaldarius, a model organism of the Crenarchaeota.</title>
        <authorList>
            <person name="Chen L."/>
            <person name="Bruegger K."/>
            <person name="Skovgaard M."/>
            <person name="Redder P."/>
            <person name="She Q."/>
            <person name="Torarinsson E."/>
            <person name="Greve B."/>
            <person name="Awayez M."/>
            <person name="Zibat A."/>
            <person name="Klenk H.-P."/>
            <person name="Garrett R.A."/>
        </authorList>
    </citation>
    <scope>NUCLEOTIDE SEQUENCE [LARGE SCALE GENOMIC DNA]</scope>
    <source>
        <strain>ATCC 33909 / DSM 639 / JCM 8929 / NBRC 15157 / NCIMB 11770</strain>
    </source>
</reference>
<evidence type="ECO:0000250" key="1"/>
<evidence type="ECO:0000305" key="2"/>
<gene>
    <name type="primary">rps4</name>
    <name type="ordered locus">Saci_0081</name>
</gene>
<feature type="chain" id="PRO_0000132520" description="Small ribosomal subunit protein uS4">
    <location>
        <begin position="1"/>
        <end position="176"/>
    </location>
</feature>
<feature type="domain" description="S4 RNA-binding">
    <location>
        <begin position="104"/>
        <end position="166"/>
    </location>
</feature>
<feature type="sequence conflict" description="In Ref. 1; CAA56478." evidence="2" ref="1">
    <original>NPPSQGEVNVEQA</original>
    <variation>KIHHHKVR</variation>
    <location>
        <begin position="164"/>
        <end position="176"/>
    </location>
</feature>
<comment type="function">
    <text evidence="1">One of the primary rRNA binding proteins, it binds directly to 16S rRNA where it nucleates assembly of the body of the 30S subunit.</text>
</comment>
<comment type="function">
    <text evidence="1">With S5 and S12 plays an important role in translational accuracy.</text>
</comment>
<comment type="subunit">
    <text evidence="1">Part of the 30S ribosomal subunit. Contacts protein S5. The interaction surface between S4 and S5 is involved in control of translational fidelity (By similarity).</text>
</comment>
<comment type="similarity">
    <text evidence="2">Belongs to the universal ribosomal protein uS4 family.</text>
</comment>
<comment type="sequence caution" evidence="2">
    <conflict type="erroneous initiation">
        <sequence resource="EMBL-CDS" id="CAA56478"/>
    </conflict>
    <text>Truncated N-terminus.</text>
</comment>
<sequence length="176" mass="20422">MGDPRKSKKKWMGPSHPWIKINLGKEQILIGKYGLRNKKEIWIAQTMIRNFRHQARSLLALPPAERNIREKQLIQKLYRMGILEKDNSTLDDILSLTEENYLERRLQTIVYKKGLARTIYQARQLITHGHIAISGRKVTSPGYVVLRGEEDLIDYYPTSPFKQNPPSQGEVNVEQA</sequence>
<proteinExistence type="evidence at protein level"/>
<accession>P39467</accession>
<accession>Q4JCH1</accession>
<keyword id="KW-0002">3D-structure</keyword>
<keyword id="KW-1185">Reference proteome</keyword>
<keyword id="KW-0687">Ribonucleoprotein</keyword>
<keyword id="KW-0689">Ribosomal protein</keyword>
<keyword id="KW-0694">RNA-binding</keyword>
<keyword id="KW-0699">rRNA-binding</keyword>
<name>RS4_SULAC</name>
<protein>
    <recommendedName>
        <fullName evidence="2">Small ribosomal subunit protein uS4</fullName>
    </recommendedName>
    <alternativeName>
        <fullName>30S ribosomal protein S4</fullName>
    </alternativeName>
</protein>
<dbReference type="EMBL" id="X80194">
    <property type="protein sequence ID" value="CAA56478.1"/>
    <property type="status" value="ALT_INIT"/>
    <property type="molecule type" value="Genomic_DNA"/>
</dbReference>
<dbReference type="EMBL" id="CP000077">
    <property type="protein sequence ID" value="AAY79508.1"/>
    <property type="molecule type" value="Genomic_DNA"/>
</dbReference>
<dbReference type="RefSeq" id="WP_011277009.1">
    <property type="nucleotide sequence ID" value="NC_007181.1"/>
</dbReference>
<dbReference type="PDB" id="8HKX">
    <property type="method" value="EM"/>
    <property type="resolution" value="3.14 A"/>
    <property type="chains" value="AS4P=3-168"/>
</dbReference>
<dbReference type="PDB" id="8HKY">
    <property type="method" value="EM"/>
    <property type="resolution" value="4.45 A"/>
    <property type="chains" value="AS4P=3-168"/>
</dbReference>
<dbReference type="PDB" id="8HKZ">
    <property type="method" value="EM"/>
    <property type="resolution" value="4.78 A"/>
    <property type="chains" value="AS4P=3-168"/>
</dbReference>
<dbReference type="PDB" id="8HL1">
    <property type="method" value="EM"/>
    <property type="resolution" value="3.93 A"/>
    <property type="chains" value="AS4P=3-168"/>
</dbReference>
<dbReference type="PDB" id="8HL2">
    <property type="method" value="EM"/>
    <property type="resolution" value="4.10 A"/>
    <property type="chains" value="AS4P=3-168"/>
</dbReference>
<dbReference type="PDB" id="8HL3">
    <property type="method" value="EM"/>
    <property type="resolution" value="4.80 A"/>
    <property type="chains" value="AS4P=3-168"/>
</dbReference>
<dbReference type="PDB" id="8HL4">
    <property type="method" value="EM"/>
    <property type="resolution" value="4.62 A"/>
    <property type="chains" value="AS4P=3-168"/>
</dbReference>
<dbReference type="PDB" id="8HL5">
    <property type="method" value="EM"/>
    <property type="resolution" value="5.72 A"/>
    <property type="chains" value="AS4P=3-168"/>
</dbReference>
<dbReference type="PDB" id="8WKP">
    <property type="method" value="EM"/>
    <property type="resolution" value="4.62 A"/>
    <property type="chains" value="AS4P=3-168"/>
</dbReference>
<dbReference type="PDB" id="8WQ2">
    <property type="method" value="EM"/>
    <property type="resolution" value="4.10 A"/>
    <property type="chains" value="AS4P=3-168"/>
</dbReference>
<dbReference type="PDB" id="8WQ4">
    <property type="method" value="EM"/>
    <property type="resolution" value="4.53 A"/>
    <property type="chains" value="AS4P=3-168"/>
</dbReference>
<dbReference type="PDBsum" id="8HKX"/>
<dbReference type="PDBsum" id="8HKY"/>
<dbReference type="PDBsum" id="8HKZ"/>
<dbReference type="PDBsum" id="8HL1"/>
<dbReference type="PDBsum" id="8HL2"/>
<dbReference type="PDBsum" id="8HL3"/>
<dbReference type="PDBsum" id="8HL4"/>
<dbReference type="PDBsum" id="8HL5"/>
<dbReference type="PDBsum" id="8WKP"/>
<dbReference type="PDBsum" id="8WQ2"/>
<dbReference type="PDBsum" id="8WQ4"/>
<dbReference type="EMDB" id="EMD-34862"/>
<dbReference type="EMDB" id="EMD-34863"/>
<dbReference type="EMDB" id="EMD-34864"/>
<dbReference type="EMDB" id="EMD-34866"/>
<dbReference type="EMDB" id="EMD-34867"/>
<dbReference type="EMDB" id="EMD-34868"/>
<dbReference type="EMDB" id="EMD-34869"/>
<dbReference type="EMDB" id="EMD-34870"/>
<dbReference type="EMDB" id="EMD-37604"/>
<dbReference type="EMDB" id="EMD-37733"/>
<dbReference type="EMDB" id="EMD-37734"/>
<dbReference type="SMR" id="P39467"/>
<dbReference type="STRING" id="330779.Saci_0081"/>
<dbReference type="GeneID" id="14550611"/>
<dbReference type="KEGG" id="sai:Saci_0081"/>
<dbReference type="PATRIC" id="fig|330779.12.peg.75"/>
<dbReference type="eggNOG" id="arCOG04239">
    <property type="taxonomic scope" value="Archaea"/>
</dbReference>
<dbReference type="HOGENOM" id="CLU_089738_1_1_2"/>
<dbReference type="Proteomes" id="UP000001018">
    <property type="component" value="Chromosome"/>
</dbReference>
<dbReference type="GO" id="GO:0015935">
    <property type="term" value="C:small ribosomal subunit"/>
    <property type="evidence" value="ECO:0007669"/>
    <property type="project" value="InterPro"/>
</dbReference>
<dbReference type="GO" id="GO:0019843">
    <property type="term" value="F:rRNA binding"/>
    <property type="evidence" value="ECO:0007669"/>
    <property type="project" value="UniProtKB-UniRule"/>
</dbReference>
<dbReference type="GO" id="GO:0003735">
    <property type="term" value="F:structural constituent of ribosome"/>
    <property type="evidence" value="ECO:0007669"/>
    <property type="project" value="InterPro"/>
</dbReference>
<dbReference type="GO" id="GO:0042274">
    <property type="term" value="P:ribosomal small subunit biogenesis"/>
    <property type="evidence" value="ECO:0007669"/>
    <property type="project" value="TreeGrafter"/>
</dbReference>
<dbReference type="GO" id="GO:0006412">
    <property type="term" value="P:translation"/>
    <property type="evidence" value="ECO:0007669"/>
    <property type="project" value="UniProtKB-UniRule"/>
</dbReference>
<dbReference type="CDD" id="cd00165">
    <property type="entry name" value="S4"/>
    <property type="match status" value="1"/>
</dbReference>
<dbReference type="Gene3D" id="3.10.290.10">
    <property type="entry name" value="RNA-binding S4 domain"/>
    <property type="match status" value="1"/>
</dbReference>
<dbReference type="HAMAP" id="MF_01306_A">
    <property type="entry name" value="Ribosomal_uS4_A"/>
    <property type="match status" value="1"/>
</dbReference>
<dbReference type="InterPro" id="IPR022801">
    <property type="entry name" value="Ribosomal_uS4"/>
</dbReference>
<dbReference type="InterPro" id="IPR022802">
    <property type="entry name" value="Ribosomal_uS4_arc"/>
</dbReference>
<dbReference type="InterPro" id="IPR018079">
    <property type="entry name" value="Ribosomal_uS4_CS"/>
</dbReference>
<dbReference type="InterPro" id="IPR005710">
    <property type="entry name" value="Ribosomal_uS4_euk/arc"/>
</dbReference>
<dbReference type="InterPro" id="IPR001912">
    <property type="entry name" value="Ribosomal_uS4_N"/>
</dbReference>
<dbReference type="InterPro" id="IPR002942">
    <property type="entry name" value="S4_RNA-bd"/>
</dbReference>
<dbReference type="InterPro" id="IPR036986">
    <property type="entry name" value="S4_RNA-bd_sf"/>
</dbReference>
<dbReference type="NCBIfam" id="NF003139">
    <property type="entry name" value="PRK04051.1"/>
    <property type="match status" value="1"/>
</dbReference>
<dbReference type="NCBIfam" id="TIGR01018">
    <property type="entry name" value="uS4_arch"/>
    <property type="match status" value="1"/>
</dbReference>
<dbReference type="PANTHER" id="PTHR11831">
    <property type="entry name" value="30S 40S RIBOSOMAL PROTEIN"/>
    <property type="match status" value="1"/>
</dbReference>
<dbReference type="PANTHER" id="PTHR11831:SF5">
    <property type="entry name" value="40S RIBOSOMAL PROTEIN S9"/>
    <property type="match status" value="1"/>
</dbReference>
<dbReference type="Pfam" id="PF00163">
    <property type="entry name" value="Ribosomal_S4"/>
    <property type="match status" value="1"/>
</dbReference>
<dbReference type="Pfam" id="PF01479">
    <property type="entry name" value="S4"/>
    <property type="match status" value="1"/>
</dbReference>
<dbReference type="SMART" id="SM01390">
    <property type="entry name" value="Ribosomal_S4"/>
    <property type="match status" value="1"/>
</dbReference>
<dbReference type="SMART" id="SM00363">
    <property type="entry name" value="S4"/>
    <property type="match status" value="1"/>
</dbReference>
<dbReference type="SUPFAM" id="SSF55174">
    <property type="entry name" value="Alpha-L RNA-binding motif"/>
    <property type="match status" value="1"/>
</dbReference>
<dbReference type="PROSITE" id="PS00632">
    <property type="entry name" value="RIBOSOMAL_S4"/>
    <property type="match status" value="1"/>
</dbReference>
<dbReference type="PROSITE" id="PS50889">
    <property type="entry name" value="S4"/>
    <property type="match status" value="1"/>
</dbReference>
<organism>
    <name type="scientific">Sulfolobus acidocaldarius (strain ATCC 33909 / DSM 639 / JCM 8929 / NBRC 15157 / NCIMB 11770)</name>
    <dbReference type="NCBI Taxonomy" id="330779"/>
    <lineage>
        <taxon>Archaea</taxon>
        <taxon>Thermoproteota</taxon>
        <taxon>Thermoprotei</taxon>
        <taxon>Sulfolobales</taxon>
        <taxon>Sulfolobaceae</taxon>
        <taxon>Sulfolobus</taxon>
    </lineage>
</organism>